<gene>
    <name type="primary">SERHL2</name>
    <name type="synonym">SERHL</name>
</gene>
<organism>
    <name type="scientific">Homo sapiens</name>
    <name type="common">Human</name>
    <dbReference type="NCBI Taxonomy" id="9606"/>
    <lineage>
        <taxon>Eukaryota</taxon>
        <taxon>Metazoa</taxon>
        <taxon>Chordata</taxon>
        <taxon>Craniata</taxon>
        <taxon>Vertebrata</taxon>
        <taxon>Euteleostomi</taxon>
        <taxon>Mammalia</taxon>
        <taxon>Eutheria</taxon>
        <taxon>Euarchontoglires</taxon>
        <taxon>Primates</taxon>
        <taxon>Haplorrhini</taxon>
        <taxon>Catarrhini</taxon>
        <taxon>Hominidae</taxon>
        <taxon>Homo</taxon>
    </lineage>
</organism>
<accession>Q9H4I8</accession>
<accession>B1AHE9</accession>
<accession>B1AHF0</accession>
<accession>Q0VDJ1</accession>
<accession>Q5H973</accession>
<accession>Q9BR29</accession>
<accession>Q9BR30</accession>
<accession>Q9Y3I9</accession>
<name>SEHL2_HUMAN</name>
<keyword id="KW-0025">Alternative splicing</keyword>
<keyword id="KW-0963">Cytoplasm</keyword>
<keyword id="KW-0378">Hydrolase</keyword>
<keyword id="KW-0576">Peroxisome</keyword>
<keyword id="KW-1267">Proteomics identification</keyword>
<keyword id="KW-1185">Reference proteome</keyword>
<proteinExistence type="evidence at protein level"/>
<dbReference type="EC" id="3.1.-.-"/>
<dbReference type="EMBL" id="AL450314">
    <property type="protein sequence ID" value="CAC16804.1"/>
    <property type="molecule type" value="mRNA"/>
</dbReference>
<dbReference type="EMBL" id="AL590120">
    <property type="protein sequence ID" value="CAC34873.1"/>
    <property type="molecule type" value="mRNA"/>
</dbReference>
<dbReference type="EMBL" id="AL590118">
    <property type="protein sequence ID" value="CAC34871.1"/>
    <property type="molecule type" value="mRNA"/>
</dbReference>
<dbReference type="EMBL" id="AL589866">
    <property type="protein sequence ID" value="CAC34477.1"/>
    <property type="molecule type" value="mRNA"/>
</dbReference>
<dbReference type="EMBL" id="Z93241">
    <property type="status" value="NOT_ANNOTATED_CDS"/>
    <property type="molecule type" value="Genomic_DNA"/>
</dbReference>
<dbReference type="EMBL" id="BC119650">
    <property type="protein sequence ID" value="AAI19651.1"/>
    <property type="molecule type" value="mRNA"/>
</dbReference>
<dbReference type="EMBL" id="BC127635">
    <property type="protein sequence ID" value="AAI27636.1"/>
    <property type="molecule type" value="mRNA"/>
</dbReference>
<dbReference type="EMBL" id="BC127636">
    <property type="protein sequence ID" value="AAI27637.1"/>
    <property type="molecule type" value="mRNA"/>
</dbReference>
<dbReference type="CCDS" id="CCDS14037.1">
    <molecule id="Q9H4I8-1"/>
</dbReference>
<dbReference type="CCDS" id="CCDS63498.1">
    <molecule id="Q9H4I8-2"/>
</dbReference>
<dbReference type="RefSeq" id="NP_001271263.1">
    <molecule id="Q9H4I8-2"/>
    <property type="nucleotide sequence ID" value="NM_001284334.2"/>
</dbReference>
<dbReference type="RefSeq" id="NP_055324.2">
    <molecule id="Q9H4I8-1"/>
    <property type="nucleotide sequence ID" value="NM_014509.4"/>
</dbReference>
<dbReference type="SMR" id="Q9H4I8"/>
<dbReference type="BioGRID" id="128960">
    <property type="interactions" value="8"/>
</dbReference>
<dbReference type="FunCoup" id="Q9H4I8">
    <property type="interactions" value="6"/>
</dbReference>
<dbReference type="IntAct" id="Q9H4I8">
    <property type="interactions" value="6"/>
</dbReference>
<dbReference type="STRING" id="9606.ENSP00000331376"/>
<dbReference type="ESTHER" id="human-SERHL2">
    <property type="family name" value="SERHL"/>
</dbReference>
<dbReference type="MEROPS" id="S33.012"/>
<dbReference type="iPTMnet" id="Q9H4I8"/>
<dbReference type="PhosphoSitePlus" id="Q9H4I8"/>
<dbReference type="BioMuta" id="SERHL2"/>
<dbReference type="DMDM" id="21362935"/>
<dbReference type="MassIVE" id="Q9H4I8"/>
<dbReference type="PaxDb" id="9606-ENSP00000331376"/>
<dbReference type="PeptideAtlas" id="Q9H4I8"/>
<dbReference type="ProteomicsDB" id="80845">
    <molecule id="Q9H4I8-1"/>
</dbReference>
<dbReference type="ProteomicsDB" id="80846">
    <molecule id="Q9H4I8-2"/>
</dbReference>
<dbReference type="ProteomicsDB" id="80847">
    <molecule id="Q9H4I8-3"/>
</dbReference>
<dbReference type="Antibodypedia" id="45931">
    <property type="antibodies" value="74 antibodies from 13 providers"/>
</dbReference>
<dbReference type="DNASU" id="253190"/>
<dbReference type="Ensembl" id="ENST00000327678.10">
    <molecule id="Q9H4I8-1"/>
    <property type="protein sequence ID" value="ENSP00000331376.5"/>
    <property type="gene ID" value="ENSG00000183569.18"/>
</dbReference>
<dbReference type="Ensembl" id="ENST00000335879.5">
    <molecule id="Q9H4I8-2"/>
    <property type="protein sequence ID" value="ENSP00000336578.5"/>
    <property type="gene ID" value="ENSG00000183569.18"/>
</dbReference>
<dbReference type="Ensembl" id="ENST00000407614.8">
    <molecule id="Q9H4I8-3"/>
    <property type="protein sequence ID" value="ENSP00000385691.4"/>
    <property type="gene ID" value="ENSG00000183569.18"/>
</dbReference>
<dbReference type="GeneID" id="253190"/>
<dbReference type="KEGG" id="hsa:253190"/>
<dbReference type="MANE-Select" id="ENST00000327678.10">
    <property type="protein sequence ID" value="ENSP00000331376.5"/>
    <property type="RefSeq nucleotide sequence ID" value="NM_014509.5"/>
    <property type="RefSeq protein sequence ID" value="NP_055324.2"/>
</dbReference>
<dbReference type="UCSC" id="uc003bcr.5">
    <molecule id="Q9H4I8-1"/>
    <property type="organism name" value="human"/>
</dbReference>
<dbReference type="AGR" id="HGNC:29446"/>
<dbReference type="CTD" id="253190"/>
<dbReference type="DisGeNET" id="253190"/>
<dbReference type="GeneCards" id="SERHL2"/>
<dbReference type="HGNC" id="HGNC:29446">
    <property type="gene designation" value="SERHL2"/>
</dbReference>
<dbReference type="HPA" id="ENSG00000183569">
    <property type="expression patterns" value="Tissue enriched (breast)"/>
</dbReference>
<dbReference type="MIM" id="619045">
    <property type="type" value="gene"/>
</dbReference>
<dbReference type="neXtProt" id="NX_Q9H4I8"/>
<dbReference type="OpenTargets" id="ENSG00000183569"/>
<dbReference type="PharmGKB" id="PA142670935"/>
<dbReference type="VEuPathDB" id="HostDB:ENSG00000183569"/>
<dbReference type="eggNOG" id="KOG1454">
    <property type="taxonomic scope" value="Eukaryota"/>
</dbReference>
<dbReference type="GeneTree" id="ENSGT00530000063960"/>
<dbReference type="HOGENOM" id="CLU_135400_0_0_1"/>
<dbReference type="InParanoid" id="Q9H4I8"/>
<dbReference type="OMA" id="HGWMDVS"/>
<dbReference type="OrthoDB" id="190201at2759"/>
<dbReference type="PAN-GO" id="Q9H4I8">
    <property type="GO annotations" value="1 GO annotation based on evolutionary models"/>
</dbReference>
<dbReference type="PhylomeDB" id="Q9H4I8"/>
<dbReference type="TreeFam" id="TF326547"/>
<dbReference type="PathwayCommons" id="Q9H4I8"/>
<dbReference type="SignaLink" id="Q9H4I8"/>
<dbReference type="BioGRID-ORCS" id="253190">
    <property type="hits" value="16 hits in 1150 CRISPR screens"/>
</dbReference>
<dbReference type="ChiTaRS" id="SERHL2">
    <property type="organism name" value="human"/>
</dbReference>
<dbReference type="GenomeRNAi" id="253190"/>
<dbReference type="Pharos" id="Q9H4I8">
    <property type="development level" value="Tdark"/>
</dbReference>
<dbReference type="PRO" id="PR:Q9H4I8"/>
<dbReference type="Proteomes" id="UP000005640">
    <property type="component" value="Chromosome 22"/>
</dbReference>
<dbReference type="RNAct" id="Q9H4I8">
    <property type="molecule type" value="protein"/>
</dbReference>
<dbReference type="Bgee" id="ENSG00000183569">
    <property type="expression patterns" value="Expressed in oocyte and 107 other cell types or tissues"/>
</dbReference>
<dbReference type="ExpressionAtlas" id="Q9H4I8">
    <property type="expression patterns" value="baseline and differential"/>
</dbReference>
<dbReference type="GO" id="GO:0048471">
    <property type="term" value="C:perinuclear region of cytoplasm"/>
    <property type="evidence" value="ECO:0007669"/>
    <property type="project" value="UniProtKB-SubCell"/>
</dbReference>
<dbReference type="GO" id="GO:0005777">
    <property type="term" value="C:peroxisome"/>
    <property type="evidence" value="ECO:0007669"/>
    <property type="project" value="UniProtKB-SubCell"/>
</dbReference>
<dbReference type="GO" id="GO:0016787">
    <property type="term" value="F:hydrolase activity"/>
    <property type="evidence" value="ECO:0000318"/>
    <property type="project" value="GO_Central"/>
</dbReference>
<dbReference type="Gene3D" id="3.40.50.1820">
    <property type="entry name" value="alpha/beta hydrolase"/>
    <property type="match status" value="1"/>
</dbReference>
<dbReference type="InterPro" id="IPR000073">
    <property type="entry name" value="AB_hydrolase_1"/>
</dbReference>
<dbReference type="InterPro" id="IPR029058">
    <property type="entry name" value="AB_hydrolase_fold"/>
</dbReference>
<dbReference type="InterPro" id="IPR050266">
    <property type="entry name" value="AB_hydrolase_sf"/>
</dbReference>
<dbReference type="PANTHER" id="PTHR43798">
    <property type="entry name" value="MONOACYLGLYCEROL LIPASE"/>
    <property type="match status" value="1"/>
</dbReference>
<dbReference type="PANTHER" id="PTHR43798:SF14">
    <property type="entry name" value="SERINE HYDROLASE-LIKE PROTEIN DDB_G0286239"/>
    <property type="match status" value="1"/>
</dbReference>
<dbReference type="Pfam" id="PF00561">
    <property type="entry name" value="Abhydrolase_1"/>
    <property type="match status" value="1"/>
</dbReference>
<dbReference type="PRINTS" id="PR00111">
    <property type="entry name" value="ABHYDROLASE"/>
</dbReference>
<dbReference type="SUPFAM" id="SSF53474">
    <property type="entry name" value="alpha/beta-Hydrolases"/>
    <property type="match status" value="1"/>
</dbReference>
<reference key="1">
    <citation type="journal article" date="2003" name="Genome Res.">
        <title>Reevaluating human gene annotation: a second-generation analysis of chromosome 22.</title>
        <authorList>
            <person name="Collins J.E."/>
            <person name="Goward M.E."/>
            <person name="Cole C.G."/>
            <person name="Smink L.J."/>
            <person name="Huckle E.J."/>
            <person name="Knowles S."/>
            <person name="Bye J.M."/>
            <person name="Beare D.M."/>
            <person name="Dunham I."/>
        </authorList>
    </citation>
    <scope>NUCLEOTIDE SEQUENCE [LARGE SCALE MRNA] (ISOFORMS 1; 2 AND 3)</scope>
    <source>
        <tissue>Kidney</tissue>
        <tissue>Testis</tissue>
    </source>
</reference>
<reference key="2">
    <citation type="journal article" date="1999" name="Nature">
        <title>The DNA sequence of human chromosome 22.</title>
        <authorList>
            <person name="Dunham I."/>
            <person name="Hunt A.R."/>
            <person name="Collins J.E."/>
            <person name="Bruskiewich R."/>
            <person name="Beare D.M."/>
            <person name="Clamp M."/>
            <person name="Smink L.J."/>
            <person name="Ainscough R."/>
            <person name="Almeida J.P."/>
            <person name="Babbage A.K."/>
            <person name="Bagguley C."/>
            <person name="Bailey J."/>
            <person name="Barlow K.F."/>
            <person name="Bates K.N."/>
            <person name="Beasley O.P."/>
            <person name="Bird C.P."/>
            <person name="Blakey S.E."/>
            <person name="Bridgeman A.M."/>
            <person name="Buck D."/>
            <person name="Burgess J."/>
            <person name="Burrill W.D."/>
            <person name="Burton J."/>
            <person name="Carder C."/>
            <person name="Carter N.P."/>
            <person name="Chen Y."/>
            <person name="Clark G."/>
            <person name="Clegg S.M."/>
            <person name="Cobley V.E."/>
            <person name="Cole C.G."/>
            <person name="Collier R.E."/>
            <person name="Connor R."/>
            <person name="Conroy D."/>
            <person name="Corby N.R."/>
            <person name="Coville G.J."/>
            <person name="Cox A.V."/>
            <person name="Davis J."/>
            <person name="Dawson E."/>
            <person name="Dhami P.D."/>
            <person name="Dockree C."/>
            <person name="Dodsworth S.J."/>
            <person name="Durbin R.M."/>
            <person name="Ellington A.G."/>
            <person name="Evans K.L."/>
            <person name="Fey J.M."/>
            <person name="Fleming K."/>
            <person name="French L."/>
            <person name="Garner A.A."/>
            <person name="Gilbert J.G.R."/>
            <person name="Goward M.E."/>
            <person name="Grafham D.V."/>
            <person name="Griffiths M.N.D."/>
            <person name="Hall C."/>
            <person name="Hall R.E."/>
            <person name="Hall-Tamlyn G."/>
            <person name="Heathcott R.W."/>
            <person name="Ho S."/>
            <person name="Holmes S."/>
            <person name="Hunt S.E."/>
            <person name="Jones M.C."/>
            <person name="Kershaw J."/>
            <person name="Kimberley A.M."/>
            <person name="King A."/>
            <person name="Laird G.K."/>
            <person name="Langford C.F."/>
            <person name="Leversha M.A."/>
            <person name="Lloyd C."/>
            <person name="Lloyd D.M."/>
            <person name="Martyn I.D."/>
            <person name="Mashreghi-Mohammadi M."/>
            <person name="Matthews L.H."/>
            <person name="Mccann O.T."/>
            <person name="Mcclay J."/>
            <person name="Mclaren S."/>
            <person name="McMurray A.A."/>
            <person name="Milne S.A."/>
            <person name="Mortimore B.J."/>
            <person name="Odell C.N."/>
            <person name="Pavitt R."/>
            <person name="Pearce A.V."/>
            <person name="Pearson D."/>
            <person name="Phillimore B.J.C.T."/>
            <person name="Phillips S.H."/>
            <person name="Plumb R.W."/>
            <person name="Ramsay H."/>
            <person name="Ramsey Y."/>
            <person name="Rogers L."/>
            <person name="Ross M.T."/>
            <person name="Scott C.E."/>
            <person name="Sehra H.K."/>
            <person name="Skuce C.D."/>
            <person name="Smalley S."/>
            <person name="Smith M.L."/>
            <person name="Soderlund C."/>
            <person name="Spragon L."/>
            <person name="Steward C.A."/>
            <person name="Sulston J.E."/>
            <person name="Swann R.M."/>
            <person name="Vaudin M."/>
            <person name="Wall M."/>
            <person name="Wallis J.M."/>
            <person name="Whiteley M.N."/>
            <person name="Willey D.L."/>
            <person name="Williams L."/>
            <person name="Williams S.A."/>
            <person name="Williamson H."/>
            <person name="Wilmer T.E."/>
            <person name="Wilming L."/>
            <person name="Wright C.L."/>
            <person name="Hubbard T."/>
            <person name="Bentley D.R."/>
            <person name="Beck S."/>
            <person name="Rogers J."/>
            <person name="Shimizu N."/>
            <person name="Minoshima S."/>
            <person name="Kawasaki K."/>
            <person name="Sasaki T."/>
            <person name="Asakawa S."/>
            <person name="Kudoh J."/>
            <person name="Shintani A."/>
            <person name="Shibuya K."/>
            <person name="Yoshizaki Y."/>
            <person name="Aoki N."/>
            <person name="Mitsuyama S."/>
            <person name="Roe B.A."/>
            <person name="Chen F."/>
            <person name="Chu L."/>
            <person name="Crabtree J."/>
            <person name="Deschamps S."/>
            <person name="Do A."/>
            <person name="Do T."/>
            <person name="Dorman A."/>
            <person name="Fang F."/>
            <person name="Fu Y."/>
            <person name="Hu P."/>
            <person name="Hua A."/>
            <person name="Kenton S."/>
            <person name="Lai H."/>
            <person name="Lao H.I."/>
            <person name="Lewis J."/>
            <person name="Lewis S."/>
            <person name="Lin S.-P."/>
            <person name="Loh P."/>
            <person name="Malaj E."/>
            <person name="Nguyen T."/>
            <person name="Pan H."/>
            <person name="Phan S."/>
            <person name="Qi S."/>
            <person name="Qian Y."/>
            <person name="Ray L."/>
            <person name="Ren Q."/>
            <person name="Shaull S."/>
            <person name="Sloan D."/>
            <person name="Song L."/>
            <person name="Wang Q."/>
            <person name="Wang Y."/>
            <person name="Wang Z."/>
            <person name="White J."/>
            <person name="Willingham D."/>
            <person name="Wu H."/>
            <person name="Yao Z."/>
            <person name="Zhan M."/>
            <person name="Zhang G."/>
            <person name="Chissoe S."/>
            <person name="Murray J."/>
            <person name="Miller N."/>
            <person name="Minx P."/>
            <person name="Fulton R."/>
            <person name="Johnson D."/>
            <person name="Bemis G."/>
            <person name="Bentley D."/>
            <person name="Bradshaw H."/>
            <person name="Bourne S."/>
            <person name="Cordes M."/>
            <person name="Du Z."/>
            <person name="Fulton L."/>
            <person name="Goela D."/>
            <person name="Graves T."/>
            <person name="Hawkins J."/>
            <person name="Hinds K."/>
            <person name="Kemp K."/>
            <person name="Latreille P."/>
            <person name="Layman D."/>
            <person name="Ozersky P."/>
            <person name="Rohlfing T."/>
            <person name="Scheet P."/>
            <person name="Walker C."/>
            <person name="Wamsley A."/>
            <person name="Wohldmann P."/>
            <person name="Pepin K."/>
            <person name="Nelson J."/>
            <person name="Korf I."/>
            <person name="Bedell J.A."/>
            <person name="Hillier L.W."/>
            <person name="Mardis E."/>
            <person name="Waterston R."/>
            <person name="Wilson R."/>
            <person name="Emanuel B.S."/>
            <person name="Shaikh T."/>
            <person name="Kurahashi H."/>
            <person name="Saitta S."/>
            <person name="Budarf M.L."/>
            <person name="McDermid H.E."/>
            <person name="Johnson A."/>
            <person name="Wong A.C.C."/>
            <person name="Morrow B.E."/>
            <person name="Edelmann L."/>
            <person name="Kim U.J."/>
            <person name="Shizuya H."/>
            <person name="Simon M.I."/>
            <person name="Dumanski J.P."/>
            <person name="Peyrard M."/>
            <person name="Kedra D."/>
            <person name="Seroussi E."/>
            <person name="Fransson I."/>
            <person name="Tapia I."/>
            <person name="Bruder C.E."/>
            <person name="O'Brien K.P."/>
            <person name="Wilkinson P."/>
            <person name="Bodenteich A."/>
            <person name="Hartman K."/>
            <person name="Hu X."/>
            <person name="Khan A.S."/>
            <person name="Lane L."/>
            <person name="Tilahun Y."/>
            <person name="Wright H."/>
        </authorList>
    </citation>
    <scope>NUCLEOTIDE SEQUENCE [LARGE SCALE GENOMIC DNA]</scope>
</reference>
<reference key="3">
    <citation type="journal article" date="2004" name="Genome Res.">
        <title>The status, quality, and expansion of the NIH full-length cDNA project: the Mammalian Gene Collection (MGC).</title>
        <authorList>
            <consortium name="The MGC Project Team"/>
        </authorList>
    </citation>
    <scope>NUCLEOTIDE SEQUENCE [LARGE SCALE MRNA] (ISOFORM 1)</scope>
</reference>
<comment type="function">
    <text>Probable serine hydrolase. May be related to cell muscle hypertrophy.</text>
</comment>
<comment type="subcellular location">
    <subcellularLocation>
        <location evidence="1">Cytoplasm</location>
        <location evidence="1">Perinuclear region</location>
    </subcellularLocation>
    <subcellularLocation>
        <location evidence="1">Peroxisome</location>
    </subcellularLocation>
    <text evidence="1">Concentrated in perinuclear vesicles. May be located in peroxisomes.</text>
</comment>
<comment type="alternative products">
    <event type="alternative splicing"/>
    <isoform>
        <id>Q9H4I8-1</id>
        <name>1</name>
        <sequence type="displayed"/>
    </isoform>
    <isoform>
        <id>Q9H4I8-2</id>
        <name>2</name>
        <sequence type="described" ref="VSP_003968 VSP_003969"/>
    </isoform>
    <isoform>
        <id>Q9H4I8-3</id>
        <name>3</name>
        <sequence type="described" ref="VSP_003970"/>
    </isoform>
    <text>Experimental confirmation may be lacking for some isoforms.</text>
</comment>
<comment type="miscellaneous">
    <text>This gene may have been partially duplicated (see SERHL).</text>
</comment>
<comment type="similarity">
    <text evidence="4">Belongs to the AB hydrolase superfamily.</text>
</comment>
<feature type="chain" id="PRO_0000097692" description="Serine hydrolase-like protein 2">
    <location>
        <begin position="1"/>
        <end position="314"/>
    </location>
</feature>
<feature type="domain" description="AB hydrolase-1" evidence="2">
    <location>
        <begin position="33"/>
        <end position="293"/>
    </location>
</feature>
<feature type="active site" evidence="2">
    <location>
        <position position="108"/>
    </location>
</feature>
<feature type="splice variant" id="VSP_003968" description="In isoform 2." evidence="3">
    <location>
        <begin position="8"/>
        <end position="57"/>
    </location>
</feature>
<feature type="splice variant" id="VSP_003970" description="In isoform 3." evidence="3">
    <location>
        <begin position="12"/>
        <end position="191"/>
    </location>
</feature>
<feature type="splice variant" id="VSP_003969" description="In isoform 2." evidence="3">
    <location>
        <begin position="96"/>
        <end position="109"/>
    </location>
</feature>
<feature type="sequence variant" id="VAR_051334" description="In dbSNP:rs3213549.">
    <original>E</original>
    <variation>K</variation>
    <location>
        <position position="3"/>
    </location>
</feature>
<feature type="sequence variant" id="VAR_021962" description="In dbSNP:rs926333.">
    <original>S</original>
    <variation>N</variation>
    <location>
        <position position="46"/>
    </location>
</feature>
<feature type="sequence variant" id="VAR_051335" description="In dbSNP:rs137055.">
    <original>C</original>
    <variation>R</variation>
    <location>
        <position position="306"/>
    </location>
</feature>
<sequence length="314" mass="35369">MSENAAPGLISELKLAVPWGHIAAKAWGSLQGPPVLCLHGWLDNASSFDRLIPLLPQDFYYVAMDFGGHGLSSHYSPGVPYYLQTFVSEIRRVVAALKWNRFSILGHSFGGVVGGMFFCTFPEMVDKLILLDTPLFLLESDEMENLLTYKRRAIEHVLQVEASQEPSHVFSLKQLLQRLLKSNSHLSEECGELLLQRGTTKVATGLVLNRDQRLAWAENSIDFISRELCAHSIRKLQAHVLLIKAVHGYFDSRQNYSEKESLSFMIDTMKSTLKEQFQFVEVPGNHCVHMSEPQHVASIISSFLQCTHMLPAQL</sequence>
<evidence type="ECO:0000250" key="1"/>
<evidence type="ECO:0000255" key="2"/>
<evidence type="ECO:0000303" key="3">
    <source>
    </source>
</evidence>
<evidence type="ECO:0000305" key="4"/>
<protein>
    <recommendedName>
        <fullName>Serine hydrolase-like protein 2</fullName>
        <ecNumber>3.1.-.-</ecNumber>
    </recommendedName>
</protein>